<organism>
    <name type="scientific">Pan troglodytes</name>
    <name type="common">Chimpanzee</name>
    <dbReference type="NCBI Taxonomy" id="9598"/>
    <lineage>
        <taxon>Eukaryota</taxon>
        <taxon>Metazoa</taxon>
        <taxon>Chordata</taxon>
        <taxon>Craniata</taxon>
        <taxon>Vertebrata</taxon>
        <taxon>Euteleostomi</taxon>
        <taxon>Mammalia</taxon>
        <taxon>Eutheria</taxon>
        <taxon>Euarchontoglires</taxon>
        <taxon>Primates</taxon>
        <taxon>Haplorrhini</taxon>
        <taxon>Catarrhini</taxon>
        <taxon>Hominidae</taxon>
        <taxon>Pan</taxon>
    </lineage>
</organism>
<gene>
    <name type="primary">CLEC4M</name>
    <name type="synonym">CD209L1</name>
</gene>
<comment type="function">
    <text evidence="1">Probable pathogen-recognition receptor involved in peripheral immune surveillance in liver. May mediate the endocytosis of pathogens which are subsequently degraded in lysosomal compartments. Probably recognizes in a calcium-dependent manner high mannose N-linked oligosaccharides in a variety of pathogen antigens. Is a receptor for ICAM3, probably by binding to mannose-like carbohydrates (By similarity).</text>
</comment>
<comment type="subunit">
    <text evidence="1">Homotetramer.</text>
</comment>
<comment type="subcellular location">
    <subcellularLocation>
        <location evidence="1">Membrane</location>
        <topology evidence="1">Single-pass type II membrane protein</topology>
    </subcellularLocation>
</comment>
<comment type="domain">
    <text evidence="1">The tandem repeat domain, also called neck domain, mediates oligomerization.</text>
</comment>
<evidence type="ECO:0000250" key="1"/>
<evidence type="ECO:0000255" key="2"/>
<evidence type="ECO:0000255" key="3">
    <source>
        <dbReference type="PROSITE-ProRule" id="PRU00040"/>
    </source>
</evidence>
<feature type="chain" id="PRO_0000046630" description="C-type lectin domain family 4 member M">
    <location>
        <begin position="1"/>
        <end position="445"/>
    </location>
</feature>
<feature type="topological domain" description="Cytoplasmic" evidence="2">
    <location>
        <begin position="1"/>
        <end position="49"/>
    </location>
</feature>
<feature type="transmembrane region" description="Helical; Signal-anchor for type II membrane protein" evidence="2">
    <location>
        <begin position="50"/>
        <end position="70"/>
    </location>
</feature>
<feature type="topological domain" description="Extracellular" evidence="2">
    <location>
        <begin position="71"/>
        <end position="445"/>
    </location>
</feature>
<feature type="repeat" description="1">
    <location>
        <begin position="108"/>
        <end position="130"/>
    </location>
</feature>
<feature type="repeat" description="2">
    <location>
        <begin position="131"/>
        <end position="151"/>
    </location>
</feature>
<feature type="repeat" description="3">
    <location>
        <begin position="154"/>
        <end position="176"/>
    </location>
</feature>
<feature type="repeat" description="4">
    <location>
        <begin position="177"/>
        <end position="199"/>
    </location>
</feature>
<feature type="repeat" description="5">
    <location>
        <begin position="200"/>
        <end position="222"/>
    </location>
</feature>
<feature type="repeat" description="6">
    <location>
        <begin position="223"/>
        <end position="245"/>
    </location>
</feature>
<feature type="repeat" description="7">
    <location>
        <begin position="246"/>
        <end position="268"/>
    </location>
</feature>
<feature type="repeat" description="8">
    <location>
        <begin position="269"/>
        <end position="291"/>
    </location>
</feature>
<feature type="repeat" description="9">
    <location>
        <begin position="292"/>
        <end position="314"/>
    </location>
</feature>
<feature type="domain" description="C-type lectin" evidence="3">
    <location>
        <begin position="320"/>
        <end position="436"/>
    </location>
</feature>
<feature type="region of interest" description="9 X approximate tandem repeats">
    <location>
        <begin position="108"/>
        <end position="315"/>
    </location>
</feature>
<feature type="short sequence motif" description="Endocytosis signal" evidence="1">
    <location>
        <begin position="14"/>
        <end position="15"/>
    </location>
</feature>
<feature type="binding site" evidence="1">
    <location>
        <position position="405"/>
    </location>
    <ligand>
        <name>Ca(2+)</name>
        <dbReference type="ChEBI" id="CHEBI:29108"/>
    </ligand>
</feature>
<feature type="binding site" evidence="1">
    <location>
        <position position="407"/>
    </location>
    <ligand>
        <name>Ca(2+)</name>
        <dbReference type="ChEBI" id="CHEBI:29108"/>
    </ligand>
</feature>
<feature type="binding site" evidence="1">
    <location>
        <position position="409"/>
    </location>
    <ligand>
        <name>Ca(2+)</name>
        <dbReference type="ChEBI" id="CHEBI:29108"/>
    </ligand>
</feature>
<feature type="binding site" evidence="1">
    <location>
        <position position="412"/>
    </location>
    <ligand>
        <name>Ca(2+)</name>
        <dbReference type="ChEBI" id="CHEBI:29108"/>
    </ligand>
</feature>
<feature type="binding site" evidence="1">
    <location>
        <position position="423"/>
    </location>
    <ligand>
        <name>Ca(2+)</name>
        <dbReference type="ChEBI" id="CHEBI:29108"/>
    </ligand>
</feature>
<feature type="binding site" evidence="1">
    <location>
        <position position="424"/>
    </location>
    <ligand>
        <name>Ca(2+)</name>
        <dbReference type="ChEBI" id="CHEBI:29108"/>
    </ligand>
</feature>
<feature type="glycosylation site" description="N-linked (GlcNAc...) asparagine" evidence="2">
    <location>
        <position position="92"/>
    </location>
</feature>
<feature type="glycosylation site" description="N-linked (GlcNAc...) asparagine" evidence="2">
    <location>
        <position position="407"/>
    </location>
</feature>
<feature type="disulfide bond" evidence="3">
    <location>
        <begin position="311"/>
        <end position="441"/>
    </location>
</feature>
<feature type="disulfide bond" evidence="3">
    <location>
        <begin position="314"/>
        <end position="325"/>
    </location>
</feature>
<feature type="disulfide bond" evidence="3">
    <location>
        <begin position="342"/>
        <end position="435"/>
    </location>
</feature>
<feature type="disulfide bond" evidence="3">
    <location>
        <begin position="414"/>
        <end position="427"/>
    </location>
</feature>
<accession>Q8HYC0</accession>
<accession>Q8HY05</accession>
<protein>
    <recommendedName>
        <fullName>C-type lectin domain family 4 member M</fullName>
    </recommendedName>
    <alternativeName>
        <fullName>CD209 antigen-like protein 1</fullName>
    </alternativeName>
    <cdAntigenName>CD299</cdAntigenName>
</protein>
<keyword id="KW-1064">Adaptive immunity</keyword>
<keyword id="KW-0106">Calcium</keyword>
<keyword id="KW-1015">Disulfide bond</keyword>
<keyword id="KW-0254">Endocytosis</keyword>
<keyword id="KW-0325">Glycoprotein</keyword>
<keyword id="KW-0391">Immunity</keyword>
<keyword id="KW-0399">Innate immunity</keyword>
<keyword id="KW-0430">Lectin</keyword>
<keyword id="KW-0465">Mannose-binding</keyword>
<keyword id="KW-0472">Membrane</keyword>
<keyword id="KW-0479">Metal-binding</keyword>
<keyword id="KW-0675">Receptor</keyword>
<keyword id="KW-1185">Reference proteome</keyword>
<keyword id="KW-0677">Repeat</keyword>
<keyword id="KW-0735">Signal-anchor</keyword>
<keyword id="KW-0812">Transmembrane</keyword>
<keyword id="KW-1133">Transmembrane helix</keyword>
<sequence length="445" mass="50544">MSDSKEPRVQQLGLLEEDPTTSGIRLFPRDFQFQQIHGHKSSTGCLGHGPLVLQLLSFTLLAGVLVAILVQVSKVPSSLSQEQSEQDTIYQNLTQLKAAVGELSEKSKLQEIYQELTQLKAAVGELPEKSKLQEIYQELTQLKAAVGELPEKSKLQEIYQELTQLKAAVGELPEKSKLQEIYQELTQLKAAVGELPEKSKLQEIYQELTQLKAAVGELPEKSKLQETYQELTQLKAAVGELPEKSKLQEIYQELTQLKAAVGELPEKSELQEIYQELTQLKAALGKLPDQSKQQQIYQELTDLKTAFERLCRHCPKDWTFFQGNCYFMSNSQRNWHNSVTACREVRAQLVVIKSAEEQNFLQLQTSRSNRFSWMGLSDLNQEGTWQWVDGSPLSPSFQRYWNSGEPNNSGNEDCAEFSGSGWNDNRCDIDNYWICKKPAVCFRDE</sequence>
<proteinExistence type="evidence at transcript level"/>
<dbReference type="EMBL" id="AY078856">
    <property type="protein sequence ID" value="AAL89536.1"/>
    <property type="molecule type" value="mRNA"/>
</dbReference>
<dbReference type="EMBL" id="AY078863">
    <property type="protein sequence ID" value="AAL89535.1"/>
    <property type="molecule type" value="Genomic_DNA"/>
</dbReference>
<dbReference type="EMBL" id="AY078857">
    <property type="protein sequence ID" value="AAL89535.1"/>
    <property type="status" value="JOINED"/>
    <property type="molecule type" value="Genomic_DNA"/>
</dbReference>
<dbReference type="EMBL" id="AY078858">
    <property type="protein sequence ID" value="AAL89535.1"/>
    <property type="status" value="JOINED"/>
    <property type="molecule type" value="Genomic_DNA"/>
</dbReference>
<dbReference type="EMBL" id="AY078859">
    <property type="protein sequence ID" value="AAL89535.1"/>
    <property type="status" value="JOINED"/>
    <property type="molecule type" value="Genomic_DNA"/>
</dbReference>
<dbReference type="EMBL" id="AY078860">
    <property type="protein sequence ID" value="AAL89535.1"/>
    <property type="status" value="JOINED"/>
    <property type="molecule type" value="Genomic_DNA"/>
</dbReference>
<dbReference type="EMBL" id="AY078861">
    <property type="protein sequence ID" value="AAL89535.1"/>
    <property type="status" value="JOINED"/>
    <property type="molecule type" value="Genomic_DNA"/>
</dbReference>
<dbReference type="EMBL" id="AY078862">
    <property type="protein sequence ID" value="AAL89535.1"/>
    <property type="status" value="JOINED"/>
    <property type="molecule type" value="Genomic_DNA"/>
</dbReference>
<dbReference type="RefSeq" id="NP_001065255.1">
    <property type="nucleotide sequence ID" value="NM_001071787.1"/>
</dbReference>
<dbReference type="SMR" id="Q8HYC0"/>
<dbReference type="FunCoup" id="Q8HYC0">
    <property type="interactions" value="252"/>
</dbReference>
<dbReference type="STRING" id="9598.ENSPTRP00000054840"/>
<dbReference type="GlyCosmos" id="Q8HYC0">
    <property type="glycosylation" value="2 sites, No reported glycans"/>
</dbReference>
<dbReference type="PaxDb" id="9598-ENSPTRP00000054847"/>
<dbReference type="Ensembl" id="ENSPTRT00000062284.4">
    <property type="protein sequence ID" value="ENSPTRP00000054840.3"/>
    <property type="gene ID" value="ENSPTRG00000010404.7"/>
</dbReference>
<dbReference type="GeneID" id="455661"/>
<dbReference type="KEGG" id="ptr:455661"/>
<dbReference type="CTD" id="10332"/>
<dbReference type="VGNC" id="VGNC:6620">
    <property type="gene designation" value="CLEC4M"/>
</dbReference>
<dbReference type="eggNOG" id="KOG4297">
    <property type="taxonomic scope" value="Eukaryota"/>
</dbReference>
<dbReference type="GeneTree" id="ENSGT00940000167383"/>
<dbReference type="HOGENOM" id="CLU_049894_7_3_1"/>
<dbReference type="InParanoid" id="Q8HYC0"/>
<dbReference type="OrthoDB" id="12963at9604"/>
<dbReference type="TreeFam" id="TF333341"/>
<dbReference type="Proteomes" id="UP000002277">
    <property type="component" value="Chromosome 19"/>
</dbReference>
<dbReference type="Bgee" id="ENSPTRG00000010404">
    <property type="expression patterns" value="Expressed in lymph node and 7 other cell types or tissues"/>
</dbReference>
<dbReference type="GO" id="GO:0009897">
    <property type="term" value="C:external side of plasma membrane"/>
    <property type="evidence" value="ECO:0000318"/>
    <property type="project" value="GO_Central"/>
</dbReference>
<dbReference type="GO" id="GO:0048306">
    <property type="term" value="F:calcium-dependent protein binding"/>
    <property type="evidence" value="ECO:0007669"/>
    <property type="project" value="Ensembl"/>
</dbReference>
<dbReference type="GO" id="GO:0005537">
    <property type="term" value="F:D-mannose binding"/>
    <property type="evidence" value="ECO:0000318"/>
    <property type="project" value="GO_Central"/>
</dbReference>
<dbReference type="GO" id="GO:0046872">
    <property type="term" value="F:metal ion binding"/>
    <property type="evidence" value="ECO:0007669"/>
    <property type="project" value="UniProtKB-KW"/>
</dbReference>
<dbReference type="GO" id="GO:0038187">
    <property type="term" value="F:pattern recognition receptor activity"/>
    <property type="evidence" value="ECO:0000318"/>
    <property type="project" value="GO_Central"/>
</dbReference>
<dbReference type="GO" id="GO:0001618">
    <property type="term" value="F:virus receptor activity"/>
    <property type="evidence" value="ECO:0007669"/>
    <property type="project" value="Ensembl"/>
</dbReference>
<dbReference type="GO" id="GO:0002250">
    <property type="term" value="P:adaptive immune response"/>
    <property type="evidence" value="ECO:0007669"/>
    <property type="project" value="UniProtKB-KW"/>
</dbReference>
<dbReference type="GO" id="GO:0006897">
    <property type="term" value="P:endocytosis"/>
    <property type="evidence" value="ECO:0007669"/>
    <property type="project" value="UniProtKB-KW"/>
</dbReference>
<dbReference type="GO" id="GO:0006955">
    <property type="term" value="P:immune response"/>
    <property type="evidence" value="ECO:0000318"/>
    <property type="project" value="GO_Central"/>
</dbReference>
<dbReference type="GO" id="GO:0045087">
    <property type="term" value="P:innate immune response"/>
    <property type="evidence" value="ECO:0007669"/>
    <property type="project" value="UniProtKB-KW"/>
</dbReference>
<dbReference type="GO" id="GO:0046813">
    <property type="term" value="P:receptor-mediated virion attachment to host cell"/>
    <property type="evidence" value="ECO:0007669"/>
    <property type="project" value="Ensembl"/>
</dbReference>
<dbReference type="CDD" id="cd03590">
    <property type="entry name" value="CLECT_DC-SIGN_like"/>
    <property type="match status" value="1"/>
</dbReference>
<dbReference type="FunFam" id="3.10.100.10:FF:000044">
    <property type="entry name" value="CD209 antigen, isoform CRA_b"/>
    <property type="match status" value="1"/>
</dbReference>
<dbReference type="Gene3D" id="3.10.100.10">
    <property type="entry name" value="Mannose-Binding Protein A, subunit A"/>
    <property type="match status" value="1"/>
</dbReference>
<dbReference type="InterPro" id="IPR001304">
    <property type="entry name" value="C-type_lectin-like"/>
</dbReference>
<dbReference type="InterPro" id="IPR016186">
    <property type="entry name" value="C-type_lectin-like/link_sf"/>
</dbReference>
<dbReference type="InterPro" id="IPR050111">
    <property type="entry name" value="C-type_lectin/snaclec_domain"/>
</dbReference>
<dbReference type="InterPro" id="IPR018378">
    <property type="entry name" value="C-type_lectin_CS"/>
</dbReference>
<dbReference type="InterPro" id="IPR033989">
    <property type="entry name" value="CD209-like_CTLD"/>
</dbReference>
<dbReference type="InterPro" id="IPR016187">
    <property type="entry name" value="CTDL_fold"/>
</dbReference>
<dbReference type="PANTHER" id="PTHR22803">
    <property type="entry name" value="MANNOSE, PHOSPHOLIPASE, LECTIN RECEPTOR RELATED"/>
    <property type="match status" value="1"/>
</dbReference>
<dbReference type="Pfam" id="PF00059">
    <property type="entry name" value="Lectin_C"/>
    <property type="match status" value="1"/>
</dbReference>
<dbReference type="SMART" id="SM00034">
    <property type="entry name" value="CLECT"/>
    <property type="match status" value="1"/>
</dbReference>
<dbReference type="SUPFAM" id="SSF56436">
    <property type="entry name" value="C-type lectin-like"/>
    <property type="match status" value="1"/>
</dbReference>
<dbReference type="PROSITE" id="PS00615">
    <property type="entry name" value="C_TYPE_LECTIN_1"/>
    <property type="match status" value="1"/>
</dbReference>
<dbReference type="PROSITE" id="PS50041">
    <property type="entry name" value="C_TYPE_LECTIN_2"/>
    <property type="match status" value="1"/>
</dbReference>
<name>CLC4M_PANTR</name>
<reference key="1">
    <citation type="journal article" date="2003" name="J. Virol.">
        <title>Novel member of the CD209 (DC-SIGN) gene family in primates.</title>
        <authorList>
            <person name="Bashirova A.A."/>
            <person name="Wu L."/>
            <person name="Cheng J."/>
            <person name="Martin T.D."/>
            <person name="Martin M.P."/>
            <person name="Benveniste R.E."/>
            <person name="Lifson J.D."/>
            <person name="Kewalramani V.N."/>
            <person name="Hughes A."/>
            <person name="Carrington M."/>
        </authorList>
    </citation>
    <scope>NUCLEOTIDE SEQUENCE [GENOMIC DNA / MRNA]</scope>
    <source>
        <strain>Isolate B1437</strain>
        <strain>Isolate CH1602</strain>
        <tissue>Liver</tissue>
    </source>
</reference>